<feature type="chain" id="PRO_0000068499" description="Putative uncharacterized protein 1">
    <location>
        <begin position="1"/>
        <end position="47"/>
    </location>
</feature>
<geneLocation type="plasmid">
    <name>Clo DF13</name>
</geneLocation>
<protein>
    <recommendedName>
        <fullName>Putative uncharacterized protein 1</fullName>
    </recommendedName>
</protein>
<reference key="1">
    <citation type="journal article" date="1981" name="Nature">
        <title>Identification of mutations affecting replication control of plasmid Clo DF13.</title>
        <authorList>
            <person name="Stuitje A.R."/>
            <person name="Spelt C.E."/>
            <person name="Veltkamp E."/>
            <person name="Nijkamp H.J.J."/>
        </authorList>
    </citation>
    <scope>NUCLEOTIDE SEQUENCE [GENOMIC DNA]</scope>
</reference>
<reference key="2">
    <citation type="journal article" date="1980" name="Nucleic Acids Res.">
        <title>The nucleotide sequence surrounding the replication origin of the cop3 mutant of the bacteriocinogenic plasmid Clo DF13.</title>
        <authorList>
            <person name="Stuitje A.R."/>
            <person name="Veltkamp E."/>
            <person name="Maat J."/>
            <person name="Heyneker H.L."/>
        </authorList>
    </citation>
    <scope>NUCLEOTIDE SEQUENCE [GENOMIC DNA] (MUTANT COP3)</scope>
</reference>
<name>YPF1_ECOLX</name>
<dbReference type="PIR" id="B93250">
    <property type="entry name" value="QQECP3"/>
</dbReference>
<keyword id="KW-0614">Plasmid</keyword>
<accession>P03846</accession>
<proteinExistence type="predicted"/>
<organism>
    <name type="scientific">Escherichia coli</name>
    <dbReference type="NCBI Taxonomy" id="562"/>
    <lineage>
        <taxon>Bacteria</taxon>
        <taxon>Pseudomonadati</taxon>
        <taxon>Pseudomonadota</taxon>
        <taxon>Gammaproteobacteria</taxon>
        <taxon>Enterobacterales</taxon>
        <taxon>Enterobacteriaceae</taxon>
        <taxon>Escherichia</taxon>
    </lineage>
</organism>
<comment type="miscellaneous">
    <text>Plasmid Clo DF13 originates from Enterobacter cloacae but is stably maintained in and studied mostly from E.coli.</text>
</comment>
<sequence>MAFYRAFPGWTQVNSYRIRRSSRAERGVLAYSPAWSERPTPSRDTSV</sequence>